<feature type="chain" id="PRO_0000400259" description="Mycothiol acetyltransferase">
    <location>
        <begin position="1"/>
        <end position="308"/>
    </location>
</feature>
<feature type="domain" description="N-acetyltransferase" evidence="1">
    <location>
        <begin position="161"/>
        <end position="308"/>
    </location>
</feature>
<feature type="binding site" evidence="1">
    <location>
        <position position="44"/>
    </location>
    <ligand>
        <name>1D-myo-inositol 2-(L-cysteinylamino)-2-deoxy-alpha-D-glucopyranoside</name>
        <dbReference type="ChEBI" id="CHEBI:58887"/>
    </ligand>
</feature>
<feature type="binding site" evidence="1">
    <location>
        <begin position="83"/>
        <end position="85"/>
    </location>
    <ligand>
        <name>acetyl-CoA</name>
        <dbReference type="ChEBI" id="CHEBI:57288"/>
        <label>1</label>
    </ligand>
</feature>
<feature type="binding site" evidence="1">
    <location>
        <position position="188"/>
    </location>
    <ligand>
        <name>1D-myo-inositol 2-(L-cysteinylamino)-2-deoxy-alpha-D-glucopyranoside</name>
        <dbReference type="ChEBI" id="CHEBI:58887"/>
    </ligand>
</feature>
<feature type="binding site" evidence="1">
    <location>
        <position position="230"/>
    </location>
    <ligand>
        <name>1D-myo-inositol 2-(L-cysteinylamino)-2-deoxy-alpha-D-glucopyranoside</name>
        <dbReference type="ChEBI" id="CHEBI:58887"/>
    </ligand>
</feature>
<feature type="binding site" evidence="1">
    <location>
        <position position="238"/>
    </location>
    <ligand>
        <name>1D-myo-inositol 2-(L-cysteinylamino)-2-deoxy-alpha-D-glucopyranoside</name>
        <dbReference type="ChEBI" id="CHEBI:58887"/>
    </ligand>
</feature>
<feature type="binding site" evidence="1">
    <location>
        <begin position="242"/>
        <end position="244"/>
    </location>
    <ligand>
        <name>acetyl-CoA</name>
        <dbReference type="ChEBI" id="CHEBI:57288"/>
        <label>2</label>
    </ligand>
</feature>
<feature type="binding site" evidence="1">
    <location>
        <begin position="249"/>
        <end position="255"/>
    </location>
    <ligand>
        <name>acetyl-CoA</name>
        <dbReference type="ChEBI" id="CHEBI:57288"/>
        <label>2</label>
    </ligand>
</feature>
<feature type="binding site" evidence="1">
    <location>
        <position position="276"/>
    </location>
    <ligand>
        <name>1D-myo-inositol 2-(L-cysteinylamino)-2-deoxy-alpha-D-glucopyranoside</name>
        <dbReference type="ChEBI" id="CHEBI:58887"/>
    </ligand>
</feature>
<feature type="binding site" evidence="1">
    <location>
        <begin position="281"/>
        <end position="286"/>
    </location>
    <ligand>
        <name>acetyl-CoA</name>
        <dbReference type="ChEBI" id="CHEBI:57288"/>
        <label>2</label>
    </ligand>
</feature>
<dbReference type="EC" id="2.3.1.189" evidence="1"/>
<dbReference type="EMBL" id="CP001802">
    <property type="protein sequence ID" value="ACY23108.1"/>
    <property type="molecule type" value="Genomic_DNA"/>
</dbReference>
<dbReference type="RefSeq" id="WP_012835611.1">
    <property type="nucleotide sequence ID" value="NC_013441.1"/>
</dbReference>
<dbReference type="SMR" id="D0L3V5"/>
<dbReference type="STRING" id="526226.Gbro_3934"/>
<dbReference type="KEGG" id="gbr:Gbro_3934"/>
<dbReference type="eggNOG" id="COG0454">
    <property type="taxonomic scope" value="Bacteria"/>
</dbReference>
<dbReference type="eggNOG" id="COG0456">
    <property type="taxonomic scope" value="Bacteria"/>
</dbReference>
<dbReference type="HOGENOM" id="CLU_068014_0_0_11"/>
<dbReference type="OrthoDB" id="3208058at2"/>
<dbReference type="Proteomes" id="UP000001219">
    <property type="component" value="Chromosome"/>
</dbReference>
<dbReference type="GO" id="GO:0035447">
    <property type="term" value="F:mycothiol synthase activity"/>
    <property type="evidence" value="ECO:0007669"/>
    <property type="project" value="UniProtKB-UniRule"/>
</dbReference>
<dbReference type="GO" id="GO:0008999">
    <property type="term" value="F:protein-N-terminal-alanine acetyltransferase activity"/>
    <property type="evidence" value="ECO:0007669"/>
    <property type="project" value="TreeGrafter"/>
</dbReference>
<dbReference type="GO" id="GO:0010125">
    <property type="term" value="P:mycothiol biosynthetic process"/>
    <property type="evidence" value="ECO:0007669"/>
    <property type="project" value="UniProtKB-UniRule"/>
</dbReference>
<dbReference type="CDD" id="cd04301">
    <property type="entry name" value="NAT_SF"/>
    <property type="match status" value="2"/>
</dbReference>
<dbReference type="Gene3D" id="3.40.630.30">
    <property type="match status" value="1"/>
</dbReference>
<dbReference type="HAMAP" id="MF_01698">
    <property type="entry name" value="MshD"/>
    <property type="match status" value="1"/>
</dbReference>
<dbReference type="InterPro" id="IPR016181">
    <property type="entry name" value="Acyl_CoA_acyltransferase"/>
</dbReference>
<dbReference type="InterPro" id="IPR000182">
    <property type="entry name" value="GNAT_dom"/>
</dbReference>
<dbReference type="InterPro" id="IPR050276">
    <property type="entry name" value="MshD_Acetyltransferase"/>
</dbReference>
<dbReference type="InterPro" id="IPR017813">
    <property type="entry name" value="Mycothiol_AcTrfase"/>
</dbReference>
<dbReference type="NCBIfam" id="TIGR03448">
    <property type="entry name" value="mycothiol_MshD"/>
    <property type="match status" value="1"/>
</dbReference>
<dbReference type="PANTHER" id="PTHR43617">
    <property type="entry name" value="L-AMINO ACID N-ACETYLTRANSFERASE"/>
    <property type="match status" value="1"/>
</dbReference>
<dbReference type="PANTHER" id="PTHR43617:SF31">
    <property type="entry name" value="MYCOTHIOL ACETYLTRANSFERASE"/>
    <property type="match status" value="1"/>
</dbReference>
<dbReference type="Pfam" id="PF00583">
    <property type="entry name" value="Acetyltransf_1"/>
    <property type="match status" value="2"/>
</dbReference>
<dbReference type="PIRSF" id="PIRSF021524">
    <property type="entry name" value="MSH_acetyltransferase"/>
    <property type="match status" value="1"/>
</dbReference>
<dbReference type="SUPFAM" id="SSF55729">
    <property type="entry name" value="Acyl-CoA N-acyltransferases (Nat)"/>
    <property type="match status" value="2"/>
</dbReference>
<dbReference type="PROSITE" id="PS51186">
    <property type="entry name" value="GNAT"/>
    <property type="match status" value="1"/>
</dbReference>
<accession>D0L3V5</accession>
<comment type="function">
    <text evidence="1">Catalyzes the transfer of acetyl from acetyl-CoA to desacetylmycothiol (Cys-GlcN-Ins) to form mycothiol.</text>
</comment>
<comment type="catalytic activity">
    <reaction evidence="1">
        <text>1D-myo-inositol 2-(L-cysteinylamino)-2-deoxy-alpha-D-glucopyranoside + acetyl-CoA = mycothiol + CoA + H(+)</text>
        <dbReference type="Rhea" id="RHEA:26172"/>
        <dbReference type="ChEBI" id="CHEBI:15378"/>
        <dbReference type="ChEBI" id="CHEBI:16768"/>
        <dbReference type="ChEBI" id="CHEBI:57287"/>
        <dbReference type="ChEBI" id="CHEBI:57288"/>
        <dbReference type="ChEBI" id="CHEBI:58887"/>
        <dbReference type="EC" id="2.3.1.189"/>
    </reaction>
</comment>
<comment type="subunit">
    <text evidence="1">Monomer.</text>
</comment>
<comment type="similarity">
    <text evidence="1">Belongs to the acetyltransferase family. MshD subfamily.</text>
</comment>
<protein>
    <recommendedName>
        <fullName evidence="1">Mycothiol acetyltransferase</fullName>
        <shortName evidence="1">MSH acetyltransferase</shortName>
        <ecNumber evidence="1">2.3.1.189</ecNumber>
    </recommendedName>
    <alternativeName>
        <fullName evidence="1">Mycothiol synthase</fullName>
    </alternativeName>
</protein>
<evidence type="ECO:0000255" key="1">
    <source>
        <dbReference type="HAMAP-Rule" id="MF_01698"/>
    </source>
</evidence>
<sequence length="308" mass="32554">MPAPTGTDHPDITVTDSLGEHDVARARLMVDGAAAADGISPLSEQAVAAIDAAAGSGVRHVISAAGYANISPGRGDEPAMIEAVVDPQLRRRGHGRALLTTAFGEAERAGDARVWAHGDLPGAQALAASMGLVRRRELLQLRRGLGTGAPALPELIVDDSVRLRTYAGSADDAEILRVNNAAFDWHPEQGGWGAEQIAERVGAAWFDPEGLFLAFDAANPERLLGFHWTKQHDTELGEVYIVGVDPAAQGRGLGRLLTLAGLHHLAATGRSEVNLYVEGDNTAALHTYERLGFGRYAIDVAYGRPEGD</sequence>
<gene>
    <name evidence="1" type="primary">mshD</name>
    <name type="ordered locus">Gbro_3934</name>
</gene>
<reference key="1">
    <citation type="submission" date="2009-10" db="EMBL/GenBank/DDBJ databases">
        <title>The complete chromosome of Gordonia bronchialis DSM 43247.</title>
        <authorList>
            <consortium name="US DOE Joint Genome Institute (JGI-PGF)"/>
            <person name="Lucas S."/>
            <person name="Copeland A."/>
            <person name="Lapidus A."/>
            <person name="Glavina del Rio T."/>
            <person name="Dalin E."/>
            <person name="Tice H."/>
            <person name="Bruce D."/>
            <person name="Goodwin L."/>
            <person name="Pitluck S."/>
            <person name="Kyrpides N."/>
            <person name="Mavromatis K."/>
            <person name="Ivanova N."/>
            <person name="Ovchinnikova G."/>
            <person name="Saunders E."/>
            <person name="Brettin T."/>
            <person name="Detter J.C."/>
            <person name="Han C."/>
            <person name="Larimer F."/>
            <person name="Land M."/>
            <person name="Hauser L."/>
            <person name="Markowitz V."/>
            <person name="Cheng J.-F."/>
            <person name="Hugenholtz P."/>
            <person name="Woyke T."/>
            <person name="Wu D."/>
            <person name="Jando M."/>
            <person name="Schneider S."/>
            <person name="Goeker M."/>
            <person name="Klenk H.-P."/>
            <person name="Eisen J.A."/>
        </authorList>
    </citation>
    <scope>NUCLEOTIDE SEQUENCE [LARGE SCALE GENOMIC DNA]</scope>
    <source>
        <strain>ATCC 25592 / DSM 43247 / BCRC 13721 / JCM 3198 / KCTC 3076 / NBRC 16047 / NCTC 10667</strain>
    </source>
</reference>
<organism>
    <name type="scientific">Gordonia bronchialis (strain ATCC 25592 / DSM 43247 / BCRC 13721 / JCM 3198 / KCTC 3076 / NBRC 16047 / NCTC 10667)</name>
    <name type="common">Rhodococcus bronchialis</name>
    <dbReference type="NCBI Taxonomy" id="526226"/>
    <lineage>
        <taxon>Bacteria</taxon>
        <taxon>Bacillati</taxon>
        <taxon>Actinomycetota</taxon>
        <taxon>Actinomycetes</taxon>
        <taxon>Mycobacteriales</taxon>
        <taxon>Gordoniaceae</taxon>
        <taxon>Gordonia</taxon>
    </lineage>
</organism>
<keyword id="KW-0012">Acyltransferase</keyword>
<keyword id="KW-1185">Reference proteome</keyword>
<keyword id="KW-0677">Repeat</keyword>
<keyword id="KW-0808">Transferase</keyword>
<name>MSHD_GORB4</name>
<proteinExistence type="inferred from homology"/>